<feature type="chain" id="PRO_0000056355" description="E3 ubiquitin-protein ligase ICP0">
    <location>
        <begin position="1"/>
        <end position="532"/>
    </location>
</feature>
<feature type="zinc finger region" description="RING-type" evidence="3">
    <location>
        <begin position="8"/>
        <end position="47"/>
    </location>
</feature>
<feature type="region of interest" description="Disordered" evidence="4">
    <location>
        <begin position="206"/>
        <end position="391"/>
    </location>
</feature>
<feature type="region of interest" description="Disordered" evidence="4">
    <location>
        <begin position="406"/>
        <end position="426"/>
    </location>
</feature>
<feature type="region of interest" description="Disordered" evidence="4">
    <location>
        <begin position="461"/>
        <end position="498"/>
    </location>
</feature>
<feature type="region of interest" description="Disordered" evidence="4">
    <location>
        <begin position="510"/>
        <end position="532"/>
    </location>
</feature>
<feature type="compositionally biased region" description="Acidic residues" evidence="4">
    <location>
        <begin position="217"/>
        <end position="227"/>
    </location>
</feature>
<feature type="compositionally biased region" description="Acidic residues" evidence="4">
    <location>
        <begin position="234"/>
        <end position="243"/>
    </location>
</feature>
<feature type="compositionally biased region" description="Basic residues" evidence="4">
    <location>
        <begin position="286"/>
        <end position="295"/>
    </location>
</feature>
<feature type="binding site" evidence="2">
    <location>
        <position position="8"/>
    </location>
    <ligand>
        <name>Zn(2+)</name>
        <dbReference type="ChEBI" id="CHEBI:29105"/>
        <label>1</label>
    </ligand>
</feature>
<feature type="binding site" evidence="2">
    <location>
        <position position="11"/>
    </location>
    <ligand>
        <name>Zn(2+)</name>
        <dbReference type="ChEBI" id="CHEBI:29105"/>
        <label>1</label>
    </ligand>
</feature>
<feature type="binding site" evidence="2">
    <location>
        <position position="24"/>
    </location>
    <ligand>
        <name>Zn(2+)</name>
        <dbReference type="ChEBI" id="CHEBI:29105"/>
        <label>2</label>
    </ligand>
</feature>
<feature type="binding site" evidence="2">
    <location>
        <position position="26"/>
    </location>
    <ligand>
        <name>Zn(2+)</name>
        <dbReference type="ChEBI" id="CHEBI:29105"/>
        <label>2</label>
    </ligand>
</feature>
<feature type="binding site" evidence="2">
    <location>
        <position position="29"/>
    </location>
    <ligand>
        <name>Zn(2+)</name>
        <dbReference type="ChEBI" id="CHEBI:29105"/>
        <label>1</label>
    </ligand>
</feature>
<feature type="binding site" evidence="2">
    <location>
        <position position="32"/>
    </location>
    <ligand>
        <name>Zn(2+)</name>
        <dbReference type="ChEBI" id="CHEBI:29105"/>
        <label>1</label>
    </ligand>
</feature>
<feature type="binding site" evidence="2">
    <location>
        <position position="43"/>
    </location>
    <ligand>
        <name>Zn(2+)</name>
        <dbReference type="ChEBI" id="CHEBI:29105"/>
        <label>2</label>
    </ligand>
</feature>
<feature type="binding site" evidence="2">
    <location>
        <position position="46"/>
    </location>
    <ligand>
        <name>Zn(2+)</name>
        <dbReference type="ChEBI" id="CHEBI:29105"/>
        <label>2</label>
    </ligand>
</feature>
<sequence length="532" mass="58630">MATVAERCPICLEDPSNYSMALPCLHAFCYVCITRWIRQNPTCPLCKVPVESVVHTIESDSEFKETKVSVDFDYDSEEDEDSFEGQFLAVDSGDAPANISAWNGPMAFVPLNANGTAGAPRLQPLVDWLVERLDQLFETPELALVMRNIVMDTLCEHGCNEEELTRQFWPMFHEDTVPFVTDLIVQAELCVASRPILPIARGRGVEYIDSSSSSSSSEEETDSDIEVDPNNLTDPEDTSDETSTDNSSAQAPRQEDSRPARARPGPPTRGRRRGRRPAAPGPASRRSARLRRRQPRTNSRTNGGDNGEIIDLTLDSDGDTEPADVSGSLNTTDQPVLIPDEEEAAPASPHTSSNSAIICLVSELTPESEEPPRDQPVAPSGSSAGERPMRPRCSLREFARRFMALAPRDSSTSEAAGPSRLGAGPRATEPFSVAVVLVDRSSEGAGLFGGRFAQHVRRRTEDESARRRGNVLLRPRRQSVPPVPYPDIASTSPLIRQGGQRVRDLQRAFQTQPAEPEEMRCPHNCQRYRRNQ</sequence>
<comment type="function">
    <text evidence="2">Evades nuclear antiviral defenses triggered by dsDNA viruses. Acts during the initial stages of lytic infection and the reactivation of latent viral genome. Prevents the antiviral effect of nuclear bodies by degrading host PML and SP100.</text>
</comment>
<comment type="catalytic activity">
    <reaction>
        <text>S-ubiquitinyl-[E2 ubiquitin-conjugating enzyme]-L-cysteine + [acceptor protein]-L-lysine = [E2 ubiquitin-conjugating enzyme]-L-cysteine + N(6)-ubiquitinyl-[acceptor protein]-L-lysine.</text>
        <dbReference type="EC" id="2.3.2.27"/>
    </reaction>
</comment>
<comment type="PTM">
    <text evidence="1">Auto-ubiquitinated.</text>
</comment>
<dbReference type="EC" id="2.3.2.27"/>
<dbReference type="EMBL" id="AY464052">
    <property type="protein sequence ID" value="AAS45947.1"/>
    <property type="molecule type" value="Genomic_DNA"/>
</dbReference>
<dbReference type="SMR" id="P84445"/>
<dbReference type="KEGG" id="vg:2948570"/>
<dbReference type="Proteomes" id="UP000008296">
    <property type="component" value="Segment"/>
</dbReference>
<dbReference type="GO" id="GO:0003677">
    <property type="term" value="F:DNA binding"/>
    <property type="evidence" value="ECO:0007669"/>
    <property type="project" value="UniProtKB-KW"/>
</dbReference>
<dbReference type="GO" id="GO:0061630">
    <property type="term" value="F:ubiquitin protein ligase activity"/>
    <property type="evidence" value="ECO:0007669"/>
    <property type="project" value="TreeGrafter"/>
</dbReference>
<dbReference type="GO" id="GO:0008270">
    <property type="term" value="F:zinc ion binding"/>
    <property type="evidence" value="ECO:0007669"/>
    <property type="project" value="UniProtKB-KW"/>
</dbReference>
<dbReference type="GO" id="GO:0006513">
    <property type="term" value="P:protein monoubiquitination"/>
    <property type="evidence" value="ECO:0007669"/>
    <property type="project" value="TreeGrafter"/>
</dbReference>
<dbReference type="GO" id="GO:0000209">
    <property type="term" value="P:protein polyubiquitination"/>
    <property type="evidence" value="ECO:0007669"/>
    <property type="project" value="TreeGrafter"/>
</dbReference>
<dbReference type="GO" id="GO:0075342">
    <property type="term" value="P:symbiont-mediated disruption of host cell PML body"/>
    <property type="evidence" value="ECO:0000250"/>
    <property type="project" value="UniProtKB"/>
</dbReference>
<dbReference type="GO" id="GO:0039593">
    <property type="term" value="P:symbiont-mediated perturbation of host exit from mitosis"/>
    <property type="evidence" value="ECO:0007669"/>
    <property type="project" value="UniProtKB-KW"/>
</dbReference>
<dbReference type="GO" id="GO:0039648">
    <property type="term" value="P:symbiont-mediated perturbation of host ubiquitin-like protein modification"/>
    <property type="evidence" value="ECO:0007669"/>
    <property type="project" value="UniProtKB-KW"/>
</dbReference>
<dbReference type="GO" id="GO:0039548">
    <property type="term" value="P:symbiont-mediated suppression of host cytoplasmic pattern recognition receptor signaling pathway via inhibition of IRF3 activity"/>
    <property type="evidence" value="ECO:0007669"/>
    <property type="project" value="UniProtKB-KW"/>
</dbReference>
<dbReference type="CDD" id="cd23130">
    <property type="entry name" value="RING-HC_EHV1-like"/>
    <property type="match status" value="1"/>
</dbReference>
<dbReference type="FunFam" id="3.30.40.10:FF:000136">
    <property type="entry name" value="E3 ubiquitin-protein ligase Topors"/>
    <property type="match status" value="1"/>
</dbReference>
<dbReference type="Gene3D" id="3.30.40.10">
    <property type="entry name" value="Zinc/RING finger domain, C3HC4 (zinc finger)"/>
    <property type="match status" value="1"/>
</dbReference>
<dbReference type="InterPro" id="IPR018957">
    <property type="entry name" value="Znf_C3HC4_RING-type"/>
</dbReference>
<dbReference type="InterPro" id="IPR001841">
    <property type="entry name" value="Znf_RING"/>
</dbReference>
<dbReference type="InterPro" id="IPR013083">
    <property type="entry name" value="Znf_RING/FYVE/PHD"/>
</dbReference>
<dbReference type="InterPro" id="IPR017907">
    <property type="entry name" value="Znf_RING_CS"/>
</dbReference>
<dbReference type="PANTHER" id="PTHR46077">
    <property type="entry name" value="E3 UBIQUITIN-PROTEIN LIGASE TOPORS"/>
    <property type="match status" value="1"/>
</dbReference>
<dbReference type="PANTHER" id="PTHR46077:SF1">
    <property type="entry name" value="TOP1 BINDING ARGININE_SERINE RICH PROTEIN, E3 UBIQUITIN LIGASE"/>
    <property type="match status" value="1"/>
</dbReference>
<dbReference type="Pfam" id="PF00097">
    <property type="entry name" value="zf-C3HC4"/>
    <property type="match status" value="1"/>
</dbReference>
<dbReference type="SMART" id="SM00184">
    <property type="entry name" value="RING"/>
    <property type="match status" value="1"/>
</dbReference>
<dbReference type="SUPFAM" id="SSF57850">
    <property type="entry name" value="RING/U-box"/>
    <property type="match status" value="1"/>
</dbReference>
<dbReference type="PROSITE" id="PS00518">
    <property type="entry name" value="ZF_RING_1"/>
    <property type="match status" value="1"/>
</dbReference>
<dbReference type="PROSITE" id="PS50089">
    <property type="entry name" value="ZF_RING_2"/>
    <property type="match status" value="1"/>
</dbReference>
<keyword id="KW-0010">Activator</keyword>
<keyword id="KW-0238">DNA-binding</keyword>
<keyword id="KW-0945">Host-virus interaction</keyword>
<keyword id="KW-1090">Inhibition of host innate immune response by virus</keyword>
<keyword id="KW-1092">Inhibition of host IRF3 by virus</keyword>
<keyword id="KW-1098">Inhibition of host mitotic exit by virus</keyword>
<keyword id="KW-1113">Inhibition of host RLR pathway by virus</keyword>
<keyword id="KW-0479">Metal-binding</keyword>
<keyword id="KW-1121">Modulation of host cell cycle by virus</keyword>
<keyword id="KW-1128">Modulation of host ubiquitin pathway by viral E3 ligase</keyword>
<keyword id="KW-1130">Modulation of host ubiquitin pathway by virus</keyword>
<keyword id="KW-0678">Repressor</keyword>
<keyword id="KW-0804">Transcription</keyword>
<keyword id="KW-0805">Transcription regulation</keyword>
<keyword id="KW-0808">Transferase</keyword>
<keyword id="KW-0832">Ubl conjugation</keyword>
<keyword id="KW-0833">Ubl conjugation pathway</keyword>
<keyword id="KW-0899">Viral immunoevasion</keyword>
<keyword id="KW-0862">Zinc</keyword>
<keyword id="KW-0863">Zinc-finger</keyword>
<gene>
    <name type="primary">ICP0</name>
</gene>
<reference evidence="5 6" key="1">
    <citation type="submission" date="2003-11" db="EMBL/GenBank/DDBJ databases">
        <authorList>
            <person name="Davis-Poynter N."/>
            <person name="Nugent J."/>
            <person name="Birch-Machin I."/>
            <person name="Allen G.P."/>
        </authorList>
    </citation>
    <scope>NUCLEOTIDE SEQUENCE [LARGE SCALE GENOMIC DNA]</scope>
</reference>
<evidence type="ECO:0000250" key="1"/>
<evidence type="ECO:0000250" key="2">
    <source>
        <dbReference type="UniProtKB" id="P28990"/>
    </source>
</evidence>
<evidence type="ECO:0000255" key="3">
    <source>
        <dbReference type="PROSITE-ProRule" id="PRU00175"/>
    </source>
</evidence>
<evidence type="ECO:0000256" key="4">
    <source>
        <dbReference type="SAM" id="MobiDB-lite"/>
    </source>
</evidence>
<evidence type="ECO:0000305" key="5"/>
<evidence type="ECO:0000312" key="6">
    <source>
        <dbReference type="EMBL" id="AAS45947.1"/>
    </source>
</evidence>
<proteinExistence type="inferred from homology"/>
<name>ICP0_EHV1V</name>
<organism>
    <name type="scientific">Equine herpesvirus 1 (strain V592)</name>
    <name type="common">EHV-1</name>
    <name type="synonym">Equine abortion virus</name>
    <dbReference type="NCBI Taxonomy" id="310273"/>
    <lineage>
        <taxon>Viruses</taxon>
        <taxon>Duplodnaviria</taxon>
        <taxon>Heunggongvirae</taxon>
        <taxon>Peploviricota</taxon>
        <taxon>Herviviricetes</taxon>
        <taxon>Herpesvirales</taxon>
        <taxon>Orthoherpesviridae</taxon>
        <taxon>Alphaherpesvirinae</taxon>
        <taxon>Varicellovirus</taxon>
        <taxon>Varicellovirus equidalpha1</taxon>
        <taxon>Equid alphaherpesvirus 1</taxon>
    </lineage>
</organism>
<protein>
    <recommendedName>
        <fullName>E3 ubiquitin-protein ligase ICP0</fullName>
        <ecNumber>2.3.2.27</ecNumber>
    </recommendedName>
    <alternativeName>
        <fullName>Infected cell protein 0</fullName>
    </alternativeName>
    <alternativeName>
        <fullName evidence="5">RING-type E3 ubiquitin transferase ICP0</fullName>
    </alternativeName>
</protein>
<organismHost>
    <name type="scientific">Equus caballus</name>
    <name type="common">Horse</name>
    <dbReference type="NCBI Taxonomy" id="9796"/>
</organismHost>
<accession>P84445</accession>
<accession>Q6S6U1</accession>